<organism>
    <name type="scientific">Xanthomonas oryzae pv. oryzae (strain KACC10331 / KXO85)</name>
    <dbReference type="NCBI Taxonomy" id="291331"/>
    <lineage>
        <taxon>Bacteria</taxon>
        <taxon>Pseudomonadati</taxon>
        <taxon>Pseudomonadota</taxon>
        <taxon>Gammaproteobacteria</taxon>
        <taxon>Lysobacterales</taxon>
        <taxon>Lysobacteraceae</taxon>
        <taxon>Xanthomonas</taxon>
    </lineage>
</organism>
<keyword id="KW-0414">Isoprene biosynthesis</keyword>
<keyword id="KW-0456">Lyase</keyword>
<keyword id="KW-0479">Metal-binding</keyword>
<keyword id="KW-1185">Reference proteome</keyword>
<comment type="function">
    <text evidence="1">Involved in the biosynthesis of isopentenyl diphosphate (IPP) and dimethylallyl diphosphate (DMAPP), two major building blocks of isoprenoid compounds. Catalyzes the conversion of 4-diphosphocytidyl-2-C-methyl-D-erythritol 2-phosphate (CDP-ME2P) to 2-C-methyl-D-erythritol 2,4-cyclodiphosphate (ME-CPP) with a corresponding release of cytidine 5-monophosphate (CMP).</text>
</comment>
<comment type="catalytic activity">
    <reaction evidence="1">
        <text>4-CDP-2-C-methyl-D-erythritol 2-phosphate = 2-C-methyl-D-erythritol 2,4-cyclic diphosphate + CMP</text>
        <dbReference type="Rhea" id="RHEA:23864"/>
        <dbReference type="ChEBI" id="CHEBI:57919"/>
        <dbReference type="ChEBI" id="CHEBI:58483"/>
        <dbReference type="ChEBI" id="CHEBI:60377"/>
        <dbReference type="EC" id="4.6.1.12"/>
    </reaction>
</comment>
<comment type="cofactor">
    <cofactor evidence="1">
        <name>a divalent metal cation</name>
        <dbReference type="ChEBI" id="CHEBI:60240"/>
    </cofactor>
    <text evidence="1">Binds 1 divalent metal cation per subunit.</text>
</comment>
<comment type="pathway">
    <text evidence="1">Isoprenoid biosynthesis; isopentenyl diphosphate biosynthesis via DXP pathway; isopentenyl diphosphate from 1-deoxy-D-xylulose 5-phosphate: step 4/6.</text>
</comment>
<comment type="subunit">
    <text evidence="1">Homotrimer.</text>
</comment>
<comment type="similarity">
    <text evidence="1">Belongs to the IspF family.</text>
</comment>
<reference key="1">
    <citation type="journal article" date="2005" name="Nucleic Acids Res.">
        <title>The genome sequence of Xanthomonas oryzae pathovar oryzae KACC10331, the bacterial blight pathogen of rice.</title>
        <authorList>
            <person name="Lee B.-M."/>
            <person name="Park Y.-J."/>
            <person name="Park D.-S."/>
            <person name="Kang H.-W."/>
            <person name="Kim J.-G."/>
            <person name="Song E.-S."/>
            <person name="Park I.-C."/>
            <person name="Yoon U.-H."/>
            <person name="Hahn J.-H."/>
            <person name="Koo B.-S."/>
            <person name="Lee G.-B."/>
            <person name="Kim H."/>
            <person name="Park H.-S."/>
            <person name="Yoon K.-O."/>
            <person name="Kim J.-H."/>
            <person name="Jung C.-H."/>
            <person name="Koh N.-H."/>
            <person name="Seo J.-S."/>
            <person name="Go S.-J."/>
        </authorList>
    </citation>
    <scope>NUCLEOTIDE SEQUENCE [LARGE SCALE GENOMIC DNA]</scope>
    <source>
        <strain>KACC10331 / KXO85</strain>
    </source>
</reference>
<proteinExistence type="inferred from homology"/>
<feature type="chain" id="PRO_0000237766" description="2-C-methyl-D-erythritol 2,4-cyclodiphosphate synthase">
    <location>
        <begin position="1"/>
        <end position="163"/>
    </location>
</feature>
<feature type="binding site" evidence="1">
    <location>
        <begin position="12"/>
        <end position="14"/>
    </location>
    <ligand>
        <name>4-CDP-2-C-methyl-D-erythritol 2-phosphate</name>
        <dbReference type="ChEBI" id="CHEBI:57919"/>
    </ligand>
</feature>
<feature type="binding site" evidence="1">
    <location>
        <position position="12"/>
    </location>
    <ligand>
        <name>a divalent metal cation</name>
        <dbReference type="ChEBI" id="CHEBI:60240"/>
    </ligand>
</feature>
<feature type="binding site" evidence="1">
    <location>
        <position position="14"/>
    </location>
    <ligand>
        <name>a divalent metal cation</name>
        <dbReference type="ChEBI" id="CHEBI:60240"/>
    </ligand>
</feature>
<feature type="binding site" evidence="1">
    <location>
        <begin position="38"/>
        <end position="39"/>
    </location>
    <ligand>
        <name>4-CDP-2-C-methyl-D-erythritol 2-phosphate</name>
        <dbReference type="ChEBI" id="CHEBI:57919"/>
    </ligand>
</feature>
<feature type="binding site" evidence="1">
    <location>
        <position position="46"/>
    </location>
    <ligand>
        <name>a divalent metal cation</name>
        <dbReference type="ChEBI" id="CHEBI:60240"/>
    </ligand>
</feature>
<feature type="binding site" evidence="1">
    <location>
        <begin position="60"/>
        <end position="62"/>
    </location>
    <ligand>
        <name>4-CDP-2-C-methyl-D-erythritol 2-phosphate</name>
        <dbReference type="ChEBI" id="CHEBI:57919"/>
    </ligand>
</feature>
<feature type="binding site" evidence="1">
    <location>
        <begin position="136"/>
        <end position="139"/>
    </location>
    <ligand>
        <name>4-CDP-2-C-methyl-D-erythritol 2-phosphate</name>
        <dbReference type="ChEBI" id="CHEBI:57919"/>
    </ligand>
</feature>
<feature type="binding site" evidence="1">
    <location>
        <position position="143"/>
    </location>
    <ligand>
        <name>4-CDP-2-C-methyl-D-erythritol 2-phosphate</name>
        <dbReference type="ChEBI" id="CHEBI:57919"/>
    </ligand>
</feature>
<feature type="binding site" evidence="1">
    <location>
        <position position="146"/>
    </location>
    <ligand>
        <name>4-CDP-2-C-methyl-D-erythritol 2-phosphate</name>
        <dbReference type="ChEBI" id="CHEBI:57919"/>
    </ligand>
</feature>
<feature type="site" description="Transition state stabilizer" evidence="1">
    <location>
        <position position="38"/>
    </location>
</feature>
<feature type="site" description="Transition state stabilizer" evidence="1">
    <location>
        <position position="137"/>
    </location>
</feature>
<accession>Q5GYK7</accession>
<sequence length="163" mass="17297">MSFNFRIGQGYDVHAFGPGEHVMLGGVRVAHSHGVLAHSDGDVVLHALCDAMLGALALGDIGRHFPPSDERWKDADSAQFLQHCDGLLRERGWRVGNADITVICERPKVGPHAVAMRERIAGLLAIELDAVSVKATTSEQLGFTGRGEGIAAQAAVLLGRIAA</sequence>
<evidence type="ECO:0000255" key="1">
    <source>
        <dbReference type="HAMAP-Rule" id="MF_00107"/>
    </source>
</evidence>
<dbReference type="EC" id="4.6.1.12" evidence="1"/>
<dbReference type="EMBL" id="AE013598">
    <property type="protein sequence ID" value="AAW76214.1"/>
    <property type="molecule type" value="Genomic_DNA"/>
</dbReference>
<dbReference type="SMR" id="Q5GYK7"/>
<dbReference type="STRING" id="291331.XOO2960"/>
<dbReference type="KEGG" id="xoo:XOO2960"/>
<dbReference type="HOGENOM" id="CLU_084630_2_0_6"/>
<dbReference type="UniPathway" id="UPA00056">
    <property type="reaction ID" value="UER00095"/>
</dbReference>
<dbReference type="Proteomes" id="UP000006735">
    <property type="component" value="Chromosome"/>
</dbReference>
<dbReference type="GO" id="GO:0008685">
    <property type="term" value="F:2-C-methyl-D-erythritol 2,4-cyclodiphosphate synthase activity"/>
    <property type="evidence" value="ECO:0007669"/>
    <property type="project" value="UniProtKB-UniRule"/>
</dbReference>
<dbReference type="GO" id="GO:0046872">
    <property type="term" value="F:metal ion binding"/>
    <property type="evidence" value="ECO:0007669"/>
    <property type="project" value="UniProtKB-KW"/>
</dbReference>
<dbReference type="GO" id="GO:0019288">
    <property type="term" value="P:isopentenyl diphosphate biosynthetic process, methylerythritol 4-phosphate pathway"/>
    <property type="evidence" value="ECO:0007669"/>
    <property type="project" value="UniProtKB-UniRule"/>
</dbReference>
<dbReference type="GO" id="GO:0016114">
    <property type="term" value="P:terpenoid biosynthetic process"/>
    <property type="evidence" value="ECO:0007669"/>
    <property type="project" value="InterPro"/>
</dbReference>
<dbReference type="CDD" id="cd00554">
    <property type="entry name" value="MECDP_synthase"/>
    <property type="match status" value="1"/>
</dbReference>
<dbReference type="FunFam" id="3.30.1330.50:FF:000001">
    <property type="entry name" value="2-C-methyl-D-erythritol 2,4-cyclodiphosphate synthase"/>
    <property type="match status" value="1"/>
</dbReference>
<dbReference type="Gene3D" id="3.30.1330.50">
    <property type="entry name" value="2-C-methyl-D-erythritol 2,4-cyclodiphosphate synthase"/>
    <property type="match status" value="1"/>
</dbReference>
<dbReference type="HAMAP" id="MF_00107">
    <property type="entry name" value="IspF"/>
    <property type="match status" value="1"/>
</dbReference>
<dbReference type="InterPro" id="IPR003526">
    <property type="entry name" value="MECDP_synthase"/>
</dbReference>
<dbReference type="InterPro" id="IPR020555">
    <property type="entry name" value="MECDP_synthase_CS"/>
</dbReference>
<dbReference type="InterPro" id="IPR036571">
    <property type="entry name" value="MECDP_synthase_sf"/>
</dbReference>
<dbReference type="NCBIfam" id="TIGR00151">
    <property type="entry name" value="ispF"/>
    <property type="match status" value="1"/>
</dbReference>
<dbReference type="PANTHER" id="PTHR43181">
    <property type="entry name" value="2-C-METHYL-D-ERYTHRITOL 2,4-CYCLODIPHOSPHATE SYNTHASE, CHLOROPLASTIC"/>
    <property type="match status" value="1"/>
</dbReference>
<dbReference type="PANTHER" id="PTHR43181:SF1">
    <property type="entry name" value="2-C-METHYL-D-ERYTHRITOL 2,4-CYCLODIPHOSPHATE SYNTHASE, CHLOROPLASTIC"/>
    <property type="match status" value="1"/>
</dbReference>
<dbReference type="Pfam" id="PF02542">
    <property type="entry name" value="YgbB"/>
    <property type="match status" value="1"/>
</dbReference>
<dbReference type="SUPFAM" id="SSF69765">
    <property type="entry name" value="IpsF-like"/>
    <property type="match status" value="1"/>
</dbReference>
<dbReference type="PROSITE" id="PS01350">
    <property type="entry name" value="ISPF"/>
    <property type="match status" value="1"/>
</dbReference>
<protein>
    <recommendedName>
        <fullName evidence="1">2-C-methyl-D-erythritol 2,4-cyclodiphosphate synthase</fullName>
        <shortName evidence="1">MECDP-synthase</shortName>
        <shortName evidence="1">MECPP-synthase</shortName>
        <shortName evidence="1">MECPS</shortName>
        <ecNumber evidence="1">4.6.1.12</ecNumber>
    </recommendedName>
</protein>
<gene>
    <name evidence="1" type="primary">ispF</name>
    <name type="ordered locus">XOO2960</name>
</gene>
<name>ISPF_XANOR</name>